<gene>
    <name evidence="1" type="primary">rplI</name>
    <name type="ordered locus">DehaBAV1_0517</name>
</gene>
<protein>
    <recommendedName>
        <fullName evidence="1">Large ribosomal subunit protein bL9</fullName>
    </recommendedName>
    <alternativeName>
        <fullName evidence="2">50S ribosomal protein L9</fullName>
    </alternativeName>
</protein>
<keyword id="KW-0687">Ribonucleoprotein</keyword>
<keyword id="KW-0689">Ribosomal protein</keyword>
<keyword id="KW-0694">RNA-binding</keyword>
<keyword id="KW-0699">rRNA-binding</keyword>
<sequence length="151" mass="16529">MKVVFLKDVPGRGKTGDIKEVNDGYARNYLIPNKLAMPASAAVKSEIAAKQAAEERRKAKAEAEMVELAKNLDGAKVNLKAKTGAKDKLYGQITTTVIAAEIEKQTGKTIDKRKLELAEPIRQLGNYEVVIRFNKDLSSKINLAVTAEENT</sequence>
<feature type="chain" id="PRO_1000081476" description="Large ribosomal subunit protein bL9">
    <location>
        <begin position="1"/>
        <end position="151"/>
    </location>
</feature>
<name>RL9_DEHMB</name>
<reference key="1">
    <citation type="submission" date="2007-05" db="EMBL/GenBank/DDBJ databases">
        <title>Complete sequence of Dehalococcoides sp. BAV1.</title>
        <authorList>
            <consortium name="US DOE Joint Genome Institute"/>
            <person name="Copeland A."/>
            <person name="Lucas S."/>
            <person name="Lapidus A."/>
            <person name="Barry K."/>
            <person name="Detter J.C."/>
            <person name="Glavina del Rio T."/>
            <person name="Hammon N."/>
            <person name="Israni S."/>
            <person name="Pitluck S."/>
            <person name="Lowry S."/>
            <person name="Clum A."/>
            <person name="Schmutz J."/>
            <person name="Larimer F."/>
            <person name="Land M."/>
            <person name="Hauser L."/>
            <person name="Kyrpides N."/>
            <person name="Kim E."/>
            <person name="Ritalahti K.M."/>
            <person name="Loeffler F."/>
            <person name="Richardson P."/>
        </authorList>
    </citation>
    <scope>NUCLEOTIDE SEQUENCE [LARGE SCALE GENOMIC DNA]</scope>
    <source>
        <strain>ATCC BAA-2100 / JCM 16839 / KCTC 5957 / BAV1</strain>
    </source>
</reference>
<organism>
    <name type="scientific">Dehalococcoides mccartyi (strain ATCC BAA-2100 / JCM 16839 / KCTC 5957 / BAV1)</name>
    <dbReference type="NCBI Taxonomy" id="216389"/>
    <lineage>
        <taxon>Bacteria</taxon>
        <taxon>Bacillati</taxon>
        <taxon>Chloroflexota</taxon>
        <taxon>Dehalococcoidia</taxon>
        <taxon>Dehalococcoidales</taxon>
        <taxon>Dehalococcoidaceae</taxon>
        <taxon>Dehalococcoides</taxon>
    </lineage>
</organism>
<comment type="function">
    <text evidence="1">Binds to the 23S rRNA.</text>
</comment>
<comment type="similarity">
    <text evidence="1">Belongs to the bacterial ribosomal protein bL9 family.</text>
</comment>
<accession>A5FRT0</accession>
<proteinExistence type="inferred from homology"/>
<dbReference type="EMBL" id="CP000688">
    <property type="protein sequence ID" value="ABQ17102.1"/>
    <property type="molecule type" value="Genomic_DNA"/>
</dbReference>
<dbReference type="SMR" id="A5FRT0"/>
<dbReference type="KEGG" id="deb:DehaBAV1_0517"/>
<dbReference type="PATRIC" id="fig|216389.18.peg.561"/>
<dbReference type="HOGENOM" id="CLU_078938_3_0_0"/>
<dbReference type="GO" id="GO:1990904">
    <property type="term" value="C:ribonucleoprotein complex"/>
    <property type="evidence" value="ECO:0007669"/>
    <property type="project" value="UniProtKB-KW"/>
</dbReference>
<dbReference type="GO" id="GO:0005840">
    <property type="term" value="C:ribosome"/>
    <property type="evidence" value="ECO:0007669"/>
    <property type="project" value="UniProtKB-KW"/>
</dbReference>
<dbReference type="GO" id="GO:0019843">
    <property type="term" value="F:rRNA binding"/>
    <property type="evidence" value="ECO:0007669"/>
    <property type="project" value="UniProtKB-UniRule"/>
</dbReference>
<dbReference type="GO" id="GO:0003735">
    <property type="term" value="F:structural constituent of ribosome"/>
    <property type="evidence" value="ECO:0007669"/>
    <property type="project" value="InterPro"/>
</dbReference>
<dbReference type="GO" id="GO:0006412">
    <property type="term" value="P:translation"/>
    <property type="evidence" value="ECO:0007669"/>
    <property type="project" value="UniProtKB-UniRule"/>
</dbReference>
<dbReference type="Gene3D" id="3.10.430.100">
    <property type="entry name" value="Ribosomal protein L9, C-terminal domain"/>
    <property type="match status" value="1"/>
</dbReference>
<dbReference type="Gene3D" id="3.40.5.10">
    <property type="entry name" value="Ribosomal protein L9, N-terminal domain"/>
    <property type="match status" value="1"/>
</dbReference>
<dbReference type="HAMAP" id="MF_00503">
    <property type="entry name" value="Ribosomal_bL9"/>
    <property type="match status" value="1"/>
</dbReference>
<dbReference type="InterPro" id="IPR000244">
    <property type="entry name" value="Ribosomal_bL9"/>
</dbReference>
<dbReference type="InterPro" id="IPR009027">
    <property type="entry name" value="Ribosomal_bL9/RNase_H1_N"/>
</dbReference>
<dbReference type="InterPro" id="IPR020594">
    <property type="entry name" value="Ribosomal_bL9_bac/chp"/>
</dbReference>
<dbReference type="InterPro" id="IPR020069">
    <property type="entry name" value="Ribosomal_bL9_C"/>
</dbReference>
<dbReference type="InterPro" id="IPR036791">
    <property type="entry name" value="Ribosomal_bL9_C_sf"/>
</dbReference>
<dbReference type="InterPro" id="IPR020070">
    <property type="entry name" value="Ribosomal_bL9_N"/>
</dbReference>
<dbReference type="InterPro" id="IPR036935">
    <property type="entry name" value="Ribosomal_bL9_N_sf"/>
</dbReference>
<dbReference type="NCBIfam" id="TIGR00158">
    <property type="entry name" value="L9"/>
    <property type="match status" value="1"/>
</dbReference>
<dbReference type="PANTHER" id="PTHR21368">
    <property type="entry name" value="50S RIBOSOMAL PROTEIN L9"/>
    <property type="match status" value="1"/>
</dbReference>
<dbReference type="Pfam" id="PF03948">
    <property type="entry name" value="Ribosomal_L9_C"/>
    <property type="match status" value="1"/>
</dbReference>
<dbReference type="Pfam" id="PF01281">
    <property type="entry name" value="Ribosomal_L9_N"/>
    <property type="match status" value="1"/>
</dbReference>
<dbReference type="SUPFAM" id="SSF55658">
    <property type="entry name" value="L9 N-domain-like"/>
    <property type="match status" value="1"/>
</dbReference>
<dbReference type="SUPFAM" id="SSF55653">
    <property type="entry name" value="Ribosomal protein L9 C-domain"/>
    <property type="match status" value="1"/>
</dbReference>
<dbReference type="PROSITE" id="PS00651">
    <property type="entry name" value="RIBOSOMAL_L9"/>
    <property type="match status" value="1"/>
</dbReference>
<evidence type="ECO:0000255" key="1">
    <source>
        <dbReference type="HAMAP-Rule" id="MF_00503"/>
    </source>
</evidence>
<evidence type="ECO:0000305" key="2"/>